<proteinExistence type="inferred from homology"/>
<accession>A1SA53</accession>
<gene>
    <name type="primary">alr</name>
    <name type="ordered locus">Sama_3057</name>
</gene>
<feature type="chain" id="PRO_1000164608" description="Alanine racemase">
    <location>
        <begin position="1"/>
        <end position="364"/>
    </location>
</feature>
<feature type="active site" description="Proton acceptor; specific for D-alanine" evidence="1">
    <location>
        <position position="35"/>
    </location>
</feature>
<feature type="active site" description="Proton acceptor; specific for L-alanine" evidence="1">
    <location>
        <position position="261"/>
    </location>
</feature>
<feature type="binding site" evidence="1">
    <location>
        <position position="136"/>
    </location>
    <ligand>
        <name>substrate</name>
    </ligand>
</feature>
<feature type="binding site" evidence="1">
    <location>
        <position position="309"/>
    </location>
    <ligand>
        <name>substrate</name>
    </ligand>
</feature>
<feature type="modified residue" description="N6-(pyridoxal phosphate)lysine" evidence="1">
    <location>
        <position position="35"/>
    </location>
</feature>
<comment type="function">
    <text evidence="1">Catalyzes the interconversion of L-alanine and D-alanine. May also act on other amino acids.</text>
</comment>
<comment type="catalytic activity">
    <reaction evidence="1">
        <text>L-alanine = D-alanine</text>
        <dbReference type="Rhea" id="RHEA:20249"/>
        <dbReference type="ChEBI" id="CHEBI:57416"/>
        <dbReference type="ChEBI" id="CHEBI:57972"/>
        <dbReference type="EC" id="5.1.1.1"/>
    </reaction>
</comment>
<comment type="cofactor">
    <cofactor evidence="1">
        <name>pyridoxal 5'-phosphate</name>
        <dbReference type="ChEBI" id="CHEBI:597326"/>
    </cofactor>
</comment>
<comment type="pathway">
    <text evidence="1">Amino-acid biosynthesis; D-alanine biosynthesis; D-alanine from L-alanine: step 1/1.</text>
</comment>
<comment type="similarity">
    <text evidence="1">Belongs to the alanine racemase family.</text>
</comment>
<reference key="1">
    <citation type="submission" date="2006-12" db="EMBL/GenBank/DDBJ databases">
        <title>Complete sequence of Shewanella amazonensis SB2B.</title>
        <authorList>
            <consortium name="US DOE Joint Genome Institute"/>
            <person name="Copeland A."/>
            <person name="Lucas S."/>
            <person name="Lapidus A."/>
            <person name="Barry K."/>
            <person name="Detter J.C."/>
            <person name="Glavina del Rio T."/>
            <person name="Hammon N."/>
            <person name="Israni S."/>
            <person name="Dalin E."/>
            <person name="Tice H."/>
            <person name="Pitluck S."/>
            <person name="Munk A.C."/>
            <person name="Brettin T."/>
            <person name="Bruce D."/>
            <person name="Han C."/>
            <person name="Tapia R."/>
            <person name="Gilna P."/>
            <person name="Schmutz J."/>
            <person name="Larimer F."/>
            <person name="Land M."/>
            <person name="Hauser L."/>
            <person name="Kyrpides N."/>
            <person name="Mikhailova N."/>
            <person name="Fredrickson J."/>
            <person name="Richardson P."/>
        </authorList>
    </citation>
    <scope>NUCLEOTIDE SEQUENCE [LARGE SCALE GENOMIC DNA]</scope>
    <source>
        <strain>ATCC BAA-1098 / SB2B</strain>
    </source>
</reference>
<dbReference type="EC" id="5.1.1.1" evidence="1"/>
<dbReference type="EMBL" id="CP000507">
    <property type="protein sequence ID" value="ABM01260.1"/>
    <property type="molecule type" value="Genomic_DNA"/>
</dbReference>
<dbReference type="RefSeq" id="WP_011761164.1">
    <property type="nucleotide sequence ID" value="NC_008700.1"/>
</dbReference>
<dbReference type="SMR" id="A1SA53"/>
<dbReference type="STRING" id="326297.Sama_3057"/>
<dbReference type="KEGG" id="saz:Sama_3057"/>
<dbReference type="eggNOG" id="COG0787">
    <property type="taxonomic scope" value="Bacteria"/>
</dbReference>
<dbReference type="HOGENOM" id="CLU_028393_1_0_6"/>
<dbReference type="OrthoDB" id="9813814at2"/>
<dbReference type="UniPathway" id="UPA00042">
    <property type="reaction ID" value="UER00497"/>
</dbReference>
<dbReference type="Proteomes" id="UP000009175">
    <property type="component" value="Chromosome"/>
</dbReference>
<dbReference type="GO" id="GO:0005829">
    <property type="term" value="C:cytosol"/>
    <property type="evidence" value="ECO:0007669"/>
    <property type="project" value="TreeGrafter"/>
</dbReference>
<dbReference type="GO" id="GO:0008784">
    <property type="term" value="F:alanine racemase activity"/>
    <property type="evidence" value="ECO:0007669"/>
    <property type="project" value="UniProtKB-UniRule"/>
</dbReference>
<dbReference type="GO" id="GO:0030170">
    <property type="term" value="F:pyridoxal phosphate binding"/>
    <property type="evidence" value="ECO:0007669"/>
    <property type="project" value="UniProtKB-UniRule"/>
</dbReference>
<dbReference type="GO" id="GO:0030632">
    <property type="term" value="P:D-alanine biosynthetic process"/>
    <property type="evidence" value="ECO:0007669"/>
    <property type="project" value="UniProtKB-UniRule"/>
</dbReference>
<dbReference type="CDD" id="cd06827">
    <property type="entry name" value="PLPDE_III_AR_proteobact"/>
    <property type="match status" value="1"/>
</dbReference>
<dbReference type="FunFam" id="2.40.37.10:FF:000002">
    <property type="entry name" value="Alanine racemase"/>
    <property type="match status" value="1"/>
</dbReference>
<dbReference type="FunFam" id="3.20.20.10:FF:000002">
    <property type="entry name" value="Alanine racemase"/>
    <property type="match status" value="1"/>
</dbReference>
<dbReference type="Gene3D" id="3.20.20.10">
    <property type="entry name" value="Alanine racemase"/>
    <property type="match status" value="1"/>
</dbReference>
<dbReference type="Gene3D" id="2.40.37.10">
    <property type="entry name" value="Lyase, Ornithine Decarboxylase, Chain A, domain 1"/>
    <property type="match status" value="1"/>
</dbReference>
<dbReference type="HAMAP" id="MF_01201">
    <property type="entry name" value="Ala_racemase"/>
    <property type="match status" value="1"/>
</dbReference>
<dbReference type="InterPro" id="IPR000821">
    <property type="entry name" value="Ala_racemase"/>
</dbReference>
<dbReference type="InterPro" id="IPR009006">
    <property type="entry name" value="Ala_racemase/Decarboxylase_C"/>
</dbReference>
<dbReference type="InterPro" id="IPR011079">
    <property type="entry name" value="Ala_racemase_C"/>
</dbReference>
<dbReference type="InterPro" id="IPR001608">
    <property type="entry name" value="Ala_racemase_N"/>
</dbReference>
<dbReference type="InterPro" id="IPR020622">
    <property type="entry name" value="Ala_racemase_pyridoxalP-BS"/>
</dbReference>
<dbReference type="InterPro" id="IPR029066">
    <property type="entry name" value="PLP-binding_barrel"/>
</dbReference>
<dbReference type="NCBIfam" id="TIGR00492">
    <property type="entry name" value="alr"/>
    <property type="match status" value="1"/>
</dbReference>
<dbReference type="PANTHER" id="PTHR30511">
    <property type="entry name" value="ALANINE RACEMASE"/>
    <property type="match status" value="1"/>
</dbReference>
<dbReference type="PANTHER" id="PTHR30511:SF4">
    <property type="entry name" value="ALANINE RACEMASE, BIOSYNTHETIC"/>
    <property type="match status" value="1"/>
</dbReference>
<dbReference type="Pfam" id="PF00842">
    <property type="entry name" value="Ala_racemase_C"/>
    <property type="match status" value="1"/>
</dbReference>
<dbReference type="Pfam" id="PF01168">
    <property type="entry name" value="Ala_racemase_N"/>
    <property type="match status" value="1"/>
</dbReference>
<dbReference type="PRINTS" id="PR00992">
    <property type="entry name" value="ALARACEMASE"/>
</dbReference>
<dbReference type="SMART" id="SM01005">
    <property type="entry name" value="Ala_racemase_C"/>
    <property type="match status" value="1"/>
</dbReference>
<dbReference type="SUPFAM" id="SSF50621">
    <property type="entry name" value="Alanine racemase C-terminal domain-like"/>
    <property type="match status" value="1"/>
</dbReference>
<dbReference type="SUPFAM" id="SSF51419">
    <property type="entry name" value="PLP-binding barrel"/>
    <property type="match status" value="1"/>
</dbReference>
<dbReference type="PROSITE" id="PS00395">
    <property type="entry name" value="ALANINE_RACEMASE"/>
    <property type="match status" value="1"/>
</dbReference>
<protein>
    <recommendedName>
        <fullName evidence="1">Alanine racemase</fullName>
        <ecNumber evidence="1">5.1.1.1</ecNumber>
    </recommendedName>
</protein>
<name>ALR_SHEAM</name>
<organism>
    <name type="scientific">Shewanella amazonensis (strain ATCC BAA-1098 / SB2B)</name>
    <dbReference type="NCBI Taxonomy" id="326297"/>
    <lineage>
        <taxon>Bacteria</taxon>
        <taxon>Pseudomonadati</taxon>
        <taxon>Pseudomonadota</taxon>
        <taxon>Gammaproteobacteria</taxon>
        <taxon>Alteromonadales</taxon>
        <taxon>Shewanellaceae</taxon>
        <taxon>Shewanella</taxon>
    </lineage>
</organism>
<sequence>MKPFPRAEISSRALKANLKRLRQIAPGSKVMAVVKANGYGHGLLNVAEVLTDAHSNADADGFGLARLEEALEVRAGGVSARLLLLEGFFRSEDLPLLVEHDIDTVVHHVSQLDMLESVSLSKPVTVWLKIDSGMHRLGFHASEFKDVYQRLQQNPNVAKPVHLMTHFSCADEPQKDFTATQMAHFNALTQGLPGDRTLANSAGVLYWPQSQADWIRPGIALYGVSPVAGDLGSNHGLEPAMELVSQLIAVREHSAGESVGYGAYWTASRDTRLGVVAIGYGDGYPRNAPEGTPVLVNGRRVPIVGRVSMDMLTVDLGPDAADKVGDRALLWGKELPVEEVAERIGTIAYELVTKLTPRVAVCLD</sequence>
<evidence type="ECO:0000255" key="1">
    <source>
        <dbReference type="HAMAP-Rule" id="MF_01201"/>
    </source>
</evidence>
<keyword id="KW-0413">Isomerase</keyword>
<keyword id="KW-0663">Pyridoxal phosphate</keyword>
<keyword id="KW-1185">Reference proteome</keyword>